<feature type="signal peptide" evidence="1">
    <location>
        <begin position="1"/>
        <end position="18"/>
    </location>
</feature>
<feature type="propeptide" id="PRO_0000021456" evidence="1 3">
    <location>
        <begin position="19"/>
        <end position="35"/>
    </location>
</feature>
<feature type="peptide" id="PRO_0000021457" description="HypSysA I" evidence="3">
    <location>
        <begin position="36"/>
        <end position="53"/>
    </location>
</feature>
<feature type="propeptide" id="PRO_0000021458" evidence="3">
    <location>
        <begin position="54"/>
        <end position="143"/>
    </location>
</feature>
<feature type="peptide" id="PRO_0000021459" description="HypSysA II" evidence="3">
    <location>
        <begin position="144"/>
        <end position="161"/>
    </location>
</feature>
<feature type="propeptide" id="PRO_0000021460" evidence="3">
    <location>
        <begin position="162"/>
        <end position="165"/>
    </location>
</feature>
<feature type="region of interest" description="Disordered" evidence="2">
    <location>
        <begin position="33"/>
        <end position="70"/>
    </location>
</feature>
<feature type="region of interest" description="Disordered" evidence="2">
    <location>
        <begin position="142"/>
        <end position="165"/>
    </location>
</feature>
<feature type="modified residue" description="4-hydroxyproline" evidence="3">
    <location>
        <position position="42"/>
    </location>
</feature>
<feature type="modified residue" description="4-hydroxyproline" evidence="3">
    <location>
        <position position="43"/>
    </location>
</feature>
<feature type="modified residue" description="4-hydroxyproline" evidence="3">
    <location>
        <position position="45"/>
    </location>
</feature>
<feature type="modified residue" description="4-hydroxyproline" evidence="3">
    <location>
        <position position="49"/>
    </location>
</feature>
<feature type="modified residue" description="4-hydroxyproline" evidence="3">
    <location>
        <position position="50"/>
    </location>
</feature>
<feature type="modified residue" description="4-hydroxyproline" evidence="3">
    <location>
        <position position="150"/>
    </location>
</feature>
<feature type="modified residue" description="4-hydroxyproline" evidence="3">
    <location>
        <position position="151"/>
    </location>
</feature>
<feature type="modified residue" description="4-hydroxyproline" evidence="3">
    <location>
        <position position="153"/>
    </location>
</feature>
<feature type="glycosylation site" description="O-linked (Ara...) hydroxyproline" evidence="1">
    <location>
        <position position="42"/>
    </location>
</feature>
<feature type="glycosylation site" description="O-linked (Ara...) hydroxyproline" evidence="1">
    <location>
        <position position="43"/>
    </location>
</feature>
<feature type="glycosylation site" description="O-linked (Ara...) hydroxyproline" evidence="1">
    <location>
        <position position="45"/>
    </location>
</feature>
<feature type="glycosylation site" description="O-linked (Ara...) hydroxyproline" evidence="1">
    <location>
        <position position="49"/>
    </location>
</feature>
<feature type="glycosylation site" description="O-linked (Ara...) hydroxyproline" evidence="1">
    <location>
        <position position="50"/>
    </location>
</feature>
<feature type="glycosylation site" description="O-linked (Ara...) hydroxyproline" evidence="1">
    <location>
        <position position="150"/>
    </location>
</feature>
<feature type="glycosylation site" description="O-linked (Ara...) hydroxyproline" evidence="1">
    <location>
        <position position="151"/>
    </location>
</feature>
<feature type="glycosylation site" description="O-linked (Ara...) hydroxyproline" evidence="1">
    <location>
        <position position="153"/>
    </location>
</feature>
<reference evidence="4" key="1">
    <citation type="journal article" date="2001" name="Nature">
        <title>Production of multiple plant hormones from a single polyprotein precursor.</title>
        <authorList>
            <person name="Pearce G."/>
            <person name="Moura D.S."/>
            <person name="Stratmann J."/>
            <person name="Ryan C.A."/>
        </authorList>
    </citation>
    <scope>NUCLEOTIDE SEQUENCE [MRNA]</scope>
    <scope>PROTEIN SEQUENCE OF 36-53 AND 144-161</scope>
    <scope>FUNCTION</scope>
    <scope>TISSUE SPECIFICITY</scope>
    <scope>MASS SPECTROMETRY</scope>
    <scope>HYDROXYLATION AT PRO-42; PRO-43; PRO-45; PRO-49; PRO-50; PRO-150; PRO-151 AND PRO-153</scope>
    <scope>GLYCOSYLATION</scope>
</reference>
<reference evidence="4" key="2">
    <citation type="journal article" date="2003" name="Proc. Natl. Acad. Sci. U.S.A.">
        <title>Systemins: a functionally defined family of peptide signals that regulate defensive genes in Solanaceae species.</title>
        <authorList>
            <person name="Ryan C.A."/>
            <person name="Pearce G."/>
        </authorList>
    </citation>
    <scope>REVIEW ON FUNCTION</scope>
</reference>
<accession>Q93WP8</accession>
<proteinExistence type="evidence at protein level"/>
<comment type="function">
    <text evidence="3">Activates a lipid-based signal transduction pathway in which linolenic acid is converted to jasmonic acid, a potent activator of defense gene transcription, including proteinase inhibitors.</text>
</comment>
<comment type="subcellular location">
    <subcellularLocation>
        <location>Secreted</location>
    </subcellularLocation>
</comment>
<comment type="tissue specificity">
    <text evidence="3">Expressed in leaves.</text>
</comment>
<comment type="induction">
    <text evidence="3">By methyl jasmonate in leaves.</text>
</comment>
<comment type="PTM">
    <text evidence="3">O-glycosylated; contains pentose side chains.</text>
</comment>
<comment type="mass spectrometry">
    <molecule>HypSysA I</molecule>
</comment>
<comment type="mass spectrometry">
    <molecule>HypSysA II</molecule>
</comment>
<evidence type="ECO:0000255" key="1"/>
<evidence type="ECO:0000256" key="2">
    <source>
        <dbReference type="SAM" id="MobiDB-lite"/>
    </source>
</evidence>
<evidence type="ECO:0000269" key="3">
    <source>
    </source>
</evidence>
<evidence type="ECO:0000305" key="4"/>
<evidence type="ECO:0000312" key="5">
    <source>
        <dbReference type="EMBL" id="AAK52096.1"/>
    </source>
</evidence>
<organism evidence="5">
    <name type="scientific">Nicotiana tabacum</name>
    <name type="common">Common tobacco</name>
    <dbReference type="NCBI Taxonomy" id="4097"/>
    <lineage>
        <taxon>Eukaryota</taxon>
        <taxon>Viridiplantae</taxon>
        <taxon>Streptophyta</taxon>
        <taxon>Embryophyta</taxon>
        <taxon>Tracheophyta</taxon>
        <taxon>Spermatophyta</taxon>
        <taxon>Magnoliopsida</taxon>
        <taxon>eudicotyledons</taxon>
        <taxon>Gunneridae</taxon>
        <taxon>Pentapetalae</taxon>
        <taxon>asterids</taxon>
        <taxon>lamiids</taxon>
        <taxon>Solanales</taxon>
        <taxon>Solanaceae</taxon>
        <taxon>Nicotianoideae</taxon>
        <taxon>Nicotianeae</taxon>
        <taxon>Nicotiana</taxon>
    </lineage>
</organism>
<dbReference type="EMBL" id="AY033148">
    <property type="protein sequence ID" value="AAK52096.1"/>
    <property type="molecule type" value="mRNA"/>
</dbReference>
<dbReference type="PaxDb" id="4097-Q93WP8"/>
<dbReference type="Proteomes" id="UP000084051">
    <property type="component" value="Unplaced"/>
</dbReference>
<dbReference type="GO" id="GO:0005576">
    <property type="term" value="C:extracellular region"/>
    <property type="evidence" value="ECO:0007669"/>
    <property type="project" value="UniProtKB-SubCell"/>
</dbReference>
<dbReference type="GO" id="GO:0005179">
    <property type="term" value="F:hormone activity"/>
    <property type="evidence" value="ECO:0007669"/>
    <property type="project" value="UniProtKB-KW"/>
</dbReference>
<dbReference type="GO" id="GO:0006952">
    <property type="term" value="P:defense response"/>
    <property type="evidence" value="ECO:0000314"/>
    <property type="project" value="UniProtKB"/>
</dbReference>
<protein>
    <recommendedName>
        <fullName>Hydroxyproline-rich systemin A</fullName>
    </recommendedName>
    <component>
        <recommendedName>
            <fullName>HypSysA I</fullName>
        </recommendedName>
        <alternativeName>
            <fullName>TobHypSysA I</fullName>
        </alternativeName>
    </component>
    <component>
        <recommendedName>
            <fullName>HypSysA II</fullName>
        </recommendedName>
        <alternativeName>
            <fullName>TobHypSysA II</fullName>
        </alternativeName>
    </component>
</protein>
<name>HSYA_TOBAC</name>
<sequence>MRVLFLIYLILSPFGAEARTLLENHEGLNVGSGYGRGANLPPPSPASSPPSKEVSNSVSPTRTDEKTSENTELVMTTIAQGENINQLFSFPTSADNYYQLASFKKLFISYLLPVSYVWNLIGSSSFDHDLVDIFDSKSDERYWNRKPLSPPSPKPADGQRPLHSY</sequence>
<keyword id="KW-0903">Direct protein sequencing</keyword>
<keyword id="KW-0325">Glycoprotein</keyword>
<keyword id="KW-0372">Hormone</keyword>
<keyword id="KW-0379">Hydroxylation</keyword>
<keyword id="KW-0611">Plant defense</keyword>
<keyword id="KW-1185">Reference proteome</keyword>
<keyword id="KW-0964">Secreted</keyword>
<keyword id="KW-0732">Signal</keyword>